<proteinExistence type="inferred from homology"/>
<evidence type="ECO:0000250" key="1"/>
<evidence type="ECO:0000250" key="2">
    <source>
        <dbReference type="UniProtKB" id="P01138"/>
    </source>
</evidence>
<evidence type="ECO:0000250" key="3">
    <source>
        <dbReference type="UniProtKB" id="P01139"/>
    </source>
</evidence>
<evidence type="ECO:0000255" key="4"/>
<evidence type="ECO:0000305" key="5"/>
<name>NGF_GORGO</name>
<reference key="1">
    <citation type="journal article" date="2004" name="Mol. Biol. Evol.">
        <title>Human-specific amino acid changes found in 103 protein-coding genes.</title>
        <authorList>
            <person name="Kitano T."/>
            <person name="Liu Y.-H."/>
            <person name="Ueda S."/>
            <person name="Saitou N."/>
        </authorList>
    </citation>
    <scope>NUCLEOTIDE SEQUENCE [GENOMIC DNA]</scope>
    <source>
        <strain>Isolate Gorilla-U1</strain>
    </source>
</reference>
<reference key="2">
    <citation type="submission" date="2002-03" db="EMBL/GenBank/DDBJ databases">
        <title>Molecular evolution in higher primates; gene specific and organism specific characteristics.</title>
        <authorList>
            <person name="O'Huigin C."/>
            <person name="Tichy H."/>
            <person name="Klein J."/>
        </authorList>
    </citation>
    <scope>NUCLEOTIDE SEQUENCE [GENOMIC DNA] OF 15-224</scope>
</reference>
<dbReference type="EMBL" id="AB037519">
    <property type="protein sequence ID" value="BAA90439.1"/>
    <property type="molecule type" value="Genomic_DNA"/>
</dbReference>
<dbReference type="EMBL" id="AY091926">
    <property type="protein sequence ID" value="AAM76544.1"/>
    <property type="molecule type" value="Genomic_DNA"/>
</dbReference>
<dbReference type="RefSeq" id="XP_018892763.1">
    <property type="nucleotide sequence ID" value="XM_019037218.3"/>
</dbReference>
<dbReference type="RefSeq" id="XP_055233269.1">
    <property type="nucleotide sequence ID" value="XM_055377294.2"/>
</dbReference>
<dbReference type="RefSeq" id="XP_063551851.1">
    <property type="nucleotide sequence ID" value="XM_063695781.1"/>
</dbReference>
<dbReference type="RefSeq" id="XP_063551855.1">
    <property type="nucleotide sequence ID" value="XM_063695785.1"/>
</dbReference>
<dbReference type="SMR" id="Q9N2F0"/>
<dbReference type="FunCoup" id="Q9N2F0">
    <property type="interactions" value="1174"/>
</dbReference>
<dbReference type="STRING" id="9593.ENSGGOP00000033777"/>
<dbReference type="GlyCosmos" id="Q9N2F0">
    <property type="glycosylation" value="3 sites, No reported glycans"/>
</dbReference>
<dbReference type="GeneID" id="101149785"/>
<dbReference type="KEGG" id="ggo:101149785"/>
<dbReference type="CTD" id="4803"/>
<dbReference type="eggNOG" id="ENOG502RYPU">
    <property type="taxonomic scope" value="Eukaryota"/>
</dbReference>
<dbReference type="InParanoid" id="Q9N2F0"/>
<dbReference type="OrthoDB" id="9394at9604"/>
<dbReference type="Proteomes" id="UP000001519">
    <property type="component" value="Unplaced"/>
</dbReference>
<dbReference type="GO" id="GO:0030424">
    <property type="term" value="C:axon"/>
    <property type="evidence" value="ECO:0000318"/>
    <property type="project" value="GO_Central"/>
</dbReference>
<dbReference type="GO" id="GO:0030425">
    <property type="term" value="C:dendrite"/>
    <property type="evidence" value="ECO:0000318"/>
    <property type="project" value="GO_Central"/>
</dbReference>
<dbReference type="GO" id="GO:0031904">
    <property type="term" value="C:endosome lumen"/>
    <property type="evidence" value="ECO:0007669"/>
    <property type="project" value="UniProtKB-SubCell"/>
</dbReference>
<dbReference type="GO" id="GO:0005615">
    <property type="term" value="C:extracellular space"/>
    <property type="evidence" value="ECO:0000318"/>
    <property type="project" value="GO_Central"/>
</dbReference>
<dbReference type="GO" id="GO:0008021">
    <property type="term" value="C:synaptic vesicle"/>
    <property type="evidence" value="ECO:0000318"/>
    <property type="project" value="GO_Central"/>
</dbReference>
<dbReference type="GO" id="GO:0008083">
    <property type="term" value="F:growth factor activity"/>
    <property type="evidence" value="ECO:0000318"/>
    <property type="project" value="GO_Central"/>
</dbReference>
<dbReference type="GO" id="GO:0008289">
    <property type="term" value="F:lipid binding"/>
    <property type="evidence" value="ECO:0007669"/>
    <property type="project" value="UniProtKB-KW"/>
</dbReference>
<dbReference type="GO" id="GO:0008191">
    <property type="term" value="F:metalloendopeptidase inhibitor activity"/>
    <property type="evidence" value="ECO:0000250"/>
    <property type="project" value="UniProtKB"/>
</dbReference>
<dbReference type="GO" id="GO:0005163">
    <property type="term" value="F:nerve growth factor receptor binding"/>
    <property type="evidence" value="ECO:0000318"/>
    <property type="project" value="GO_Central"/>
</dbReference>
<dbReference type="GO" id="GO:0007169">
    <property type="term" value="P:cell surface receptor protein tyrosine kinase signaling pathway"/>
    <property type="evidence" value="ECO:0000318"/>
    <property type="project" value="GO_Central"/>
</dbReference>
<dbReference type="GO" id="GO:0050804">
    <property type="term" value="P:modulation of chemical synaptic transmission"/>
    <property type="evidence" value="ECO:0000318"/>
    <property type="project" value="GO_Central"/>
</dbReference>
<dbReference type="GO" id="GO:0043524">
    <property type="term" value="P:negative regulation of neuron apoptotic process"/>
    <property type="evidence" value="ECO:0000318"/>
    <property type="project" value="GO_Central"/>
</dbReference>
<dbReference type="GO" id="GO:0021675">
    <property type="term" value="P:nerve development"/>
    <property type="evidence" value="ECO:0000318"/>
    <property type="project" value="GO_Central"/>
</dbReference>
<dbReference type="GO" id="GO:0038180">
    <property type="term" value="P:nerve growth factor signaling pathway"/>
    <property type="evidence" value="ECO:0000318"/>
    <property type="project" value="GO_Central"/>
</dbReference>
<dbReference type="GO" id="GO:0048812">
    <property type="term" value="P:neuron projection morphogenesis"/>
    <property type="evidence" value="ECO:0000318"/>
    <property type="project" value="GO_Central"/>
</dbReference>
<dbReference type="FunFam" id="2.10.90.10:FF:000002">
    <property type="entry name" value="Brain-derived neurotrophic factor"/>
    <property type="match status" value="1"/>
</dbReference>
<dbReference type="Gene3D" id="2.10.90.10">
    <property type="entry name" value="Cystine-knot cytokines"/>
    <property type="match status" value="1"/>
</dbReference>
<dbReference type="InterPro" id="IPR029034">
    <property type="entry name" value="Cystine-knot_cytokine"/>
</dbReference>
<dbReference type="InterPro" id="IPR020408">
    <property type="entry name" value="Nerve_growth_factor-like"/>
</dbReference>
<dbReference type="InterPro" id="IPR002072">
    <property type="entry name" value="Nerve_growth_factor-rel"/>
</dbReference>
<dbReference type="InterPro" id="IPR020425">
    <property type="entry name" value="Nerve_growth_factor_bsu"/>
</dbReference>
<dbReference type="InterPro" id="IPR020437">
    <property type="entry name" value="Nerve_growth_factor_bsu_mml"/>
</dbReference>
<dbReference type="InterPro" id="IPR019846">
    <property type="entry name" value="Nerve_growth_factor_CS"/>
</dbReference>
<dbReference type="PANTHER" id="PTHR11589:SF10">
    <property type="entry name" value="BETA-NERVE GROWTH FACTOR"/>
    <property type="match status" value="1"/>
</dbReference>
<dbReference type="PANTHER" id="PTHR11589">
    <property type="entry name" value="NERVE GROWTH FACTOR NGF -RELATED"/>
    <property type="match status" value="1"/>
</dbReference>
<dbReference type="Pfam" id="PF00243">
    <property type="entry name" value="NGF"/>
    <property type="match status" value="1"/>
</dbReference>
<dbReference type="PIRSF" id="PIRSF001789">
    <property type="entry name" value="NGF"/>
    <property type="match status" value="1"/>
</dbReference>
<dbReference type="PRINTS" id="PR01925">
    <property type="entry name" value="MAMLNGFBETA"/>
</dbReference>
<dbReference type="PRINTS" id="PR00268">
    <property type="entry name" value="NGF"/>
</dbReference>
<dbReference type="PRINTS" id="PR01913">
    <property type="entry name" value="NGFBETA"/>
</dbReference>
<dbReference type="SMART" id="SM00140">
    <property type="entry name" value="NGF"/>
    <property type="match status" value="1"/>
</dbReference>
<dbReference type="SUPFAM" id="SSF57501">
    <property type="entry name" value="Cystine-knot cytokines"/>
    <property type="match status" value="1"/>
</dbReference>
<dbReference type="PROSITE" id="PS00248">
    <property type="entry name" value="NGF_1"/>
    <property type="match status" value="1"/>
</dbReference>
<dbReference type="PROSITE" id="PS50270">
    <property type="entry name" value="NGF_2"/>
    <property type="match status" value="1"/>
</dbReference>
<organism>
    <name type="scientific">Gorilla gorilla gorilla</name>
    <name type="common">Western lowland gorilla</name>
    <dbReference type="NCBI Taxonomy" id="9595"/>
    <lineage>
        <taxon>Eukaryota</taxon>
        <taxon>Metazoa</taxon>
        <taxon>Chordata</taxon>
        <taxon>Craniata</taxon>
        <taxon>Vertebrata</taxon>
        <taxon>Euteleostomi</taxon>
        <taxon>Mammalia</taxon>
        <taxon>Eutheria</taxon>
        <taxon>Euarchontoglires</taxon>
        <taxon>Primates</taxon>
        <taxon>Haplorrhini</taxon>
        <taxon>Catarrhini</taxon>
        <taxon>Hominidae</taxon>
        <taxon>Gorilla</taxon>
    </lineage>
</organism>
<accession>Q9N2F0</accession>
<accession>Q8HZH2</accession>
<feature type="signal peptide" evidence="4">
    <location>
        <begin position="1"/>
        <end position="18"/>
    </location>
</feature>
<feature type="propeptide" id="PRO_0000277872" evidence="1">
    <location>
        <begin position="19"/>
        <end position="121"/>
    </location>
</feature>
<feature type="chain" id="PRO_0000277873" description="Beta-nerve growth factor">
    <location>
        <begin position="122"/>
        <end position="241"/>
    </location>
</feature>
<feature type="binding site" description="in other chain" evidence="3">
    <location>
        <position position="173"/>
    </location>
    <ligand>
        <name>a 1-acyl-sn-glycero-3-phospho-(1D-myo-inositol)</name>
        <dbReference type="ChEBI" id="CHEBI:64771"/>
        <note>ligand shared between dimeric partners</note>
    </ligand>
</feature>
<feature type="binding site" evidence="3">
    <location>
        <position position="209"/>
    </location>
    <ligand>
        <name>a 1-acyl-sn-glycero-3-phospho-(1D-myo-inositol)</name>
        <dbReference type="ChEBI" id="CHEBI:64771"/>
        <note>ligand shared between dimeric partners</note>
    </ligand>
</feature>
<feature type="binding site" evidence="3">
    <location>
        <position position="209"/>
    </location>
    <ligand>
        <name>a 1-acyl-sn-glycero-3-phospho-L-serine</name>
        <dbReference type="ChEBI" id="CHEBI:64379"/>
        <note>ligand shared between dimeric partners</note>
    </ligand>
</feature>
<feature type="glycosylation site" description="N-linked (GlcNAc...) asparagine" evidence="4">
    <location>
        <position position="69"/>
    </location>
</feature>
<feature type="glycosylation site" description="N-linked (GlcNAc...) asparagine" evidence="4">
    <location>
        <position position="114"/>
    </location>
</feature>
<feature type="glycosylation site" description="N-linked (GlcNAc...) asparagine" evidence="4">
    <location>
        <position position="166"/>
    </location>
</feature>
<feature type="disulfide bond" evidence="2">
    <location>
        <begin position="136"/>
        <end position="201"/>
    </location>
</feature>
<feature type="disulfide bond" evidence="2">
    <location>
        <begin position="179"/>
        <end position="229"/>
    </location>
</feature>
<feature type="disulfide bond" evidence="2">
    <location>
        <begin position="189"/>
        <end position="231"/>
    </location>
</feature>
<gene>
    <name type="primary">NGF</name>
    <name type="synonym">NGFB</name>
</gene>
<comment type="function">
    <text evidence="2 3">Nerve growth factor is important for the development and maintenance of the sympathetic and sensory nervous systems. Extracellular ligand for the NTRK1 and NGFR receptors, activates cellular signaling cascades to regulate neuronal proliferation, differentiation and survival (By similarity). The immature NGF precursor (proNGF) functions as a ligand for the heterodimeric receptor formed by SORCS2 and NGFR, and activates cellular signaling cascades that lead to inactivation of RAC1 and/or RAC2, reorganization of the actin cytoskeleton and neuronal growth cone collapse. In contrast to mature NGF, the precursor form (proNGF) promotes neuronal apoptosis (in vitro) (By similarity). Inhibits metalloproteinase-dependent proteolysis of platelet glycoprotein VI (By similarity). Binds lysophosphatidylinositol and lysophosphatidylserine between the two chains of the homodimer. The lipid-bound form promotes histamine relase from mast cells, contrary to the lipid-free form (By similarity).</text>
</comment>
<comment type="subunit">
    <text evidence="2 3">Homodimer. The homodimer interacts with a single NTRK1 chain. The homodimer interacts with a single NGFR chain (By similarity). The NGF dimer interacts with a single SORCS2 chain (via extracellular domain). The NGF precursor (proNGF) binds to a receptor complex formed by SORT1 and NGFR, which leads to NGF endocytosis. Both mature NGF and the immature NGF precursor (proNGF) interact with SORCS2 and with the heterodimer formed by SORCS2 and NGFR (via extracellular domains). The NGF precursor (proNGF) has much higher affinity for SORCS2 than mature NGF. The NGF precursor (proNGF) has much higher affinity for SORT1 than mature NGF (By similarity). Interacts with ADAM10 in a divalent cation-dependent manner (By similarity). Interacts with SORCS3 (By similarity).</text>
</comment>
<comment type="subcellular location">
    <subcellularLocation>
        <location evidence="2">Secreted</location>
    </subcellularLocation>
    <subcellularLocation>
        <location evidence="3">Endosome lumen</location>
    </subcellularLocation>
    <text evidence="3">ProNGF is endocytosed after binding to the cell surface receptor formed by SORT1 and NGFR.</text>
</comment>
<comment type="similarity">
    <text evidence="5">Belongs to the NGF-beta family.</text>
</comment>
<sequence>MSMLFYTLITAFLIGIQAELHSESNVPAGHTIPQAHWTKLQHSLDTALRRARSAPAAAIAARVAGQTRNITVDPRLFKKRRLRSPRVLFSTQPPPEAADTQDLDFEVGGAAPFNRTHRSKRSSSHPIFHRGEFSVCDSVSVWVGDKTTATDIKGKEVMVLGEVNINNSVFKQYFFETKCRDPNPVDSGCRGIDSKHWNSYCTTTHTFVKALTMDGKQAAWRFIRIDTACVCVLSRKAVRRA</sequence>
<protein>
    <recommendedName>
        <fullName>Beta-nerve growth factor</fullName>
        <shortName>Beta-NGF</shortName>
    </recommendedName>
</protein>
<keyword id="KW-0165">Cleavage on pair of basic residues</keyword>
<keyword id="KW-1015">Disulfide bond</keyword>
<keyword id="KW-0967">Endosome</keyword>
<keyword id="KW-0325">Glycoprotein</keyword>
<keyword id="KW-0339">Growth factor</keyword>
<keyword id="KW-0446">Lipid-binding</keyword>
<keyword id="KW-0481">Metalloenzyme inhibitor</keyword>
<keyword id="KW-0483">Metalloprotease inhibitor</keyword>
<keyword id="KW-0646">Protease inhibitor</keyword>
<keyword id="KW-1185">Reference proteome</keyword>
<keyword id="KW-0964">Secreted</keyword>
<keyword id="KW-0732">Signal</keyword>